<protein>
    <recommendedName>
        <fullName evidence="1">Succinyl-diaminopimelate desuccinylase</fullName>
        <shortName evidence="1">SDAP desuccinylase</shortName>
        <ecNumber evidence="1">3.5.1.18</ecNumber>
    </recommendedName>
    <alternativeName>
        <fullName evidence="1">N-succinyl-LL-2,6-diaminoheptanedioate amidohydrolase</fullName>
    </alternativeName>
</protein>
<gene>
    <name evidence="1" type="primary">dapE</name>
    <name type="ordered locus">Bcep18194_A5341</name>
</gene>
<comment type="function">
    <text evidence="1">Catalyzes the hydrolysis of N-succinyl-L,L-diaminopimelic acid (SDAP), forming succinate and LL-2,6-diaminopimelate (DAP), an intermediate involved in the bacterial biosynthesis of lysine and meso-diaminopimelic acid, an essential component of bacterial cell walls.</text>
</comment>
<comment type="catalytic activity">
    <reaction evidence="1">
        <text>N-succinyl-(2S,6S)-2,6-diaminopimelate + H2O = (2S,6S)-2,6-diaminopimelate + succinate</text>
        <dbReference type="Rhea" id="RHEA:22608"/>
        <dbReference type="ChEBI" id="CHEBI:15377"/>
        <dbReference type="ChEBI" id="CHEBI:30031"/>
        <dbReference type="ChEBI" id="CHEBI:57609"/>
        <dbReference type="ChEBI" id="CHEBI:58087"/>
        <dbReference type="EC" id="3.5.1.18"/>
    </reaction>
</comment>
<comment type="cofactor">
    <cofactor evidence="1">
        <name>Zn(2+)</name>
        <dbReference type="ChEBI" id="CHEBI:29105"/>
    </cofactor>
    <cofactor evidence="1">
        <name>Co(2+)</name>
        <dbReference type="ChEBI" id="CHEBI:48828"/>
    </cofactor>
    <text evidence="1">Binds 2 Zn(2+) or Co(2+) ions per subunit.</text>
</comment>
<comment type="pathway">
    <text evidence="1">Amino-acid biosynthesis; L-lysine biosynthesis via DAP pathway; LL-2,6-diaminopimelate from (S)-tetrahydrodipicolinate (succinylase route): step 3/3.</text>
</comment>
<comment type="subunit">
    <text evidence="1">Homodimer.</text>
</comment>
<comment type="similarity">
    <text evidence="1">Belongs to the peptidase M20A family. DapE subfamily.</text>
</comment>
<name>DAPE_BURL3</name>
<keyword id="KW-0028">Amino-acid biosynthesis</keyword>
<keyword id="KW-0170">Cobalt</keyword>
<keyword id="KW-0220">Diaminopimelate biosynthesis</keyword>
<keyword id="KW-0378">Hydrolase</keyword>
<keyword id="KW-0457">Lysine biosynthesis</keyword>
<keyword id="KW-0479">Metal-binding</keyword>
<keyword id="KW-0862">Zinc</keyword>
<feature type="chain" id="PRO_0000375512" description="Succinyl-diaminopimelate desuccinylase">
    <location>
        <begin position="1"/>
        <end position="379"/>
    </location>
</feature>
<feature type="active site" evidence="1">
    <location>
        <position position="72"/>
    </location>
</feature>
<feature type="active site" description="Proton acceptor" evidence="1">
    <location>
        <position position="137"/>
    </location>
</feature>
<feature type="binding site" evidence="1">
    <location>
        <position position="70"/>
    </location>
    <ligand>
        <name>Zn(2+)</name>
        <dbReference type="ChEBI" id="CHEBI:29105"/>
        <label>1</label>
    </ligand>
</feature>
<feature type="binding site" evidence="1">
    <location>
        <position position="103"/>
    </location>
    <ligand>
        <name>Zn(2+)</name>
        <dbReference type="ChEBI" id="CHEBI:29105"/>
        <label>1</label>
    </ligand>
</feature>
<feature type="binding site" evidence="1">
    <location>
        <position position="103"/>
    </location>
    <ligand>
        <name>Zn(2+)</name>
        <dbReference type="ChEBI" id="CHEBI:29105"/>
        <label>2</label>
    </ligand>
</feature>
<feature type="binding site" evidence="1">
    <location>
        <position position="138"/>
    </location>
    <ligand>
        <name>Zn(2+)</name>
        <dbReference type="ChEBI" id="CHEBI:29105"/>
        <label>2</label>
    </ligand>
</feature>
<feature type="binding site" evidence="1">
    <location>
        <position position="166"/>
    </location>
    <ligand>
        <name>Zn(2+)</name>
        <dbReference type="ChEBI" id="CHEBI:29105"/>
        <label>1</label>
    </ligand>
</feature>
<feature type="binding site" evidence="1">
    <location>
        <position position="352"/>
    </location>
    <ligand>
        <name>Zn(2+)</name>
        <dbReference type="ChEBI" id="CHEBI:29105"/>
        <label>2</label>
    </ligand>
</feature>
<proteinExistence type="inferred from homology"/>
<sequence length="379" mass="40885">MSATLALTEQLIARASVTPDDQHCQQIMTERLTALGFECETIASHGVTNLWAVKRGTDGRDGKLLAFAGHTDVVPTGPLEQWSSPPFIPAHRDGKLYGRGAADMKTSLAAFVVASEEFVAAHPGHRGTIAFLITSDEEGPATDGTVKVVELLEARGERMDYCIVGEPTSTTELGDVVKNGRRGSMSGELVVKGVQGHIAYPHLAKNPIHLLAPALAELAAEQWDEGNEYFPPTTWQVSNLHAGTGASNVIPGHADLLFNFRFSTASTVEGLQARVHAILDKHGLEYTLKWSVSGLPFLTPRGELSGALENAIRTETGITTELSTTGGTSDGRFIARICPQVIEFGPPNGSIHKIDEHIEVRFVDPLKNVYRRVLEQLIA</sequence>
<reference key="1">
    <citation type="submission" date="2005-10" db="EMBL/GenBank/DDBJ databases">
        <title>Complete sequence of chromosome 1 of Burkholderia sp. 383.</title>
        <authorList>
            <consortium name="US DOE Joint Genome Institute"/>
            <person name="Copeland A."/>
            <person name="Lucas S."/>
            <person name="Lapidus A."/>
            <person name="Barry K."/>
            <person name="Detter J.C."/>
            <person name="Glavina T."/>
            <person name="Hammon N."/>
            <person name="Israni S."/>
            <person name="Pitluck S."/>
            <person name="Chain P."/>
            <person name="Malfatti S."/>
            <person name="Shin M."/>
            <person name="Vergez L."/>
            <person name="Schmutz J."/>
            <person name="Larimer F."/>
            <person name="Land M."/>
            <person name="Kyrpides N."/>
            <person name="Lykidis A."/>
            <person name="Richardson P."/>
        </authorList>
    </citation>
    <scope>NUCLEOTIDE SEQUENCE [LARGE SCALE GENOMIC DNA]</scope>
    <source>
        <strain>ATCC 17760 / DSM 23089 / LMG 22485 / NCIMB 9086 / R18194 / 383</strain>
    </source>
</reference>
<dbReference type="EC" id="3.5.1.18" evidence="1"/>
<dbReference type="EMBL" id="CP000151">
    <property type="protein sequence ID" value="ABB08935.1"/>
    <property type="molecule type" value="Genomic_DNA"/>
</dbReference>
<dbReference type="RefSeq" id="WP_011352472.1">
    <property type="nucleotide sequence ID" value="NC_007510.1"/>
</dbReference>
<dbReference type="SMR" id="Q39F31"/>
<dbReference type="GeneID" id="45095216"/>
<dbReference type="KEGG" id="bur:Bcep18194_A5341"/>
<dbReference type="PATRIC" id="fig|482957.22.peg.2291"/>
<dbReference type="HOGENOM" id="CLU_021802_4_0_4"/>
<dbReference type="UniPathway" id="UPA00034">
    <property type="reaction ID" value="UER00021"/>
</dbReference>
<dbReference type="Proteomes" id="UP000002705">
    <property type="component" value="Chromosome 1"/>
</dbReference>
<dbReference type="GO" id="GO:0008777">
    <property type="term" value="F:acetylornithine deacetylase activity"/>
    <property type="evidence" value="ECO:0007669"/>
    <property type="project" value="TreeGrafter"/>
</dbReference>
<dbReference type="GO" id="GO:0050897">
    <property type="term" value="F:cobalt ion binding"/>
    <property type="evidence" value="ECO:0007669"/>
    <property type="project" value="UniProtKB-UniRule"/>
</dbReference>
<dbReference type="GO" id="GO:0009014">
    <property type="term" value="F:succinyl-diaminopimelate desuccinylase activity"/>
    <property type="evidence" value="ECO:0007669"/>
    <property type="project" value="UniProtKB-UniRule"/>
</dbReference>
<dbReference type="GO" id="GO:0008270">
    <property type="term" value="F:zinc ion binding"/>
    <property type="evidence" value="ECO:0007669"/>
    <property type="project" value="UniProtKB-UniRule"/>
</dbReference>
<dbReference type="GO" id="GO:0019877">
    <property type="term" value="P:diaminopimelate biosynthetic process"/>
    <property type="evidence" value="ECO:0007669"/>
    <property type="project" value="UniProtKB-UniRule"/>
</dbReference>
<dbReference type="GO" id="GO:0006526">
    <property type="term" value="P:L-arginine biosynthetic process"/>
    <property type="evidence" value="ECO:0007669"/>
    <property type="project" value="TreeGrafter"/>
</dbReference>
<dbReference type="GO" id="GO:0009089">
    <property type="term" value="P:lysine biosynthetic process via diaminopimelate"/>
    <property type="evidence" value="ECO:0007669"/>
    <property type="project" value="UniProtKB-UniRule"/>
</dbReference>
<dbReference type="CDD" id="cd03891">
    <property type="entry name" value="M20_DapE_proteobac"/>
    <property type="match status" value="1"/>
</dbReference>
<dbReference type="FunFam" id="3.30.70.360:FF:000011">
    <property type="entry name" value="Succinyl-diaminopimelate desuccinylase"/>
    <property type="match status" value="1"/>
</dbReference>
<dbReference type="FunFam" id="3.40.630.10:FF:000005">
    <property type="entry name" value="Succinyl-diaminopimelate desuccinylase"/>
    <property type="match status" value="1"/>
</dbReference>
<dbReference type="Gene3D" id="3.40.630.10">
    <property type="entry name" value="Zn peptidases"/>
    <property type="match status" value="2"/>
</dbReference>
<dbReference type="HAMAP" id="MF_01690">
    <property type="entry name" value="DapE"/>
    <property type="match status" value="1"/>
</dbReference>
<dbReference type="InterPro" id="IPR001261">
    <property type="entry name" value="ArgE/DapE_CS"/>
</dbReference>
<dbReference type="InterPro" id="IPR036264">
    <property type="entry name" value="Bact_exopeptidase_dim_dom"/>
</dbReference>
<dbReference type="InterPro" id="IPR005941">
    <property type="entry name" value="DapE_proteobac"/>
</dbReference>
<dbReference type="InterPro" id="IPR002933">
    <property type="entry name" value="Peptidase_M20"/>
</dbReference>
<dbReference type="InterPro" id="IPR011650">
    <property type="entry name" value="Peptidase_M20_dimer"/>
</dbReference>
<dbReference type="InterPro" id="IPR050072">
    <property type="entry name" value="Peptidase_M20A"/>
</dbReference>
<dbReference type="NCBIfam" id="TIGR01246">
    <property type="entry name" value="dapE_proteo"/>
    <property type="match status" value="1"/>
</dbReference>
<dbReference type="NCBIfam" id="NF009557">
    <property type="entry name" value="PRK13009.1"/>
    <property type="match status" value="1"/>
</dbReference>
<dbReference type="PANTHER" id="PTHR43808">
    <property type="entry name" value="ACETYLORNITHINE DEACETYLASE"/>
    <property type="match status" value="1"/>
</dbReference>
<dbReference type="PANTHER" id="PTHR43808:SF31">
    <property type="entry name" value="N-ACETYL-L-CITRULLINE DEACETYLASE"/>
    <property type="match status" value="1"/>
</dbReference>
<dbReference type="Pfam" id="PF07687">
    <property type="entry name" value="M20_dimer"/>
    <property type="match status" value="1"/>
</dbReference>
<dbReference type="Pfam" id="PF01546">
    <property type="entry name" value="Peptidase_M20"/>
    <property type="match status" value="1"/>
</dbReference>
<dbReference type="SUPFAM" id="SSF55031">
    <property type="entry name" value="Bacterial exopeptidase dimerisation domain"/>
    <property type="match status" value="1"/>
</dbReference>
<dbReference type="SUPFAM" id="SSF53187">
    <property type="entry name" value="Zn-dependent exopeptidases"/>
    <property type="match status" value="1"/>
</dbReference>
<dbReference type="PROSITE" id="PS00758">
    <property type="entry name" value="ARGE_DAPE_CPG2_1"/>
    <property type="match status" value="1"/>
</dbReference>
<organism>
    <name type="scientific">Burkholderia lata (strain ATCC 17760 / DSM 23089 / LMG 22485 / NCIMB 9086 / R18194 / 383)</name>
    <dbReference type="NCBI Taxonomy" id="482957"/>
    <lineage>
        <taxon>Bacteria</taxon>
        <taxon>Pseudomonadati</taxon>
        <taxon>Pseudomonadota</taxon>
        <taxon>Betaproteobacteria</taxon>
        <taxon>Burkholderiales</taxon>
        <taxon>Burkholderiaceae</taxon>
        <taxon>Burkholderia</taxon>
        <taxon>Burkholderia cepacia complex</taxon>
    </lineage>
</organism>
<accession>Q39F31</accession>
<evidence type="ECO:0000255" key="1">
    <source>
        <dbReference type="HAMAP-Rule" id="MF_01690"/>
    </source>
</evidence>